<name>GLGC_THEYD</name>
<gene>
    <name evidence="1" type="primary">glgC</name>
    <name type="ordered locus">THEYE_A0372</name>
</gene>
<keyword id="KW-0067">ATP-binding</keyword>
<keyword id="KW-0119">Carbohydrate metabolism</keyword>
<keyword id="KW-0320">Glycogen biosynthesis</keyword>
<keyword id="KW-0321">Glycogen metabolism</keyword>
<keyword id="KW-0547">Nucleotide-binding</keyword>
<keyword id="KW-0548">Nucleotidyltransferase</keyword>
<keyword id="KW-1185">Reference proteome</keyword>
<keyword id="KW-0808">Transferase</keyword>
<protein>
    <recommendedName>
        <fullName evidence="1">Glucose-1-phosphate adenylyltransferase</fullName>
        <ecNumber evidence="1">2.7.7.27</ecNumber>
    </recommendedName>
    <alternativeName>
        <fullName evidence="1">ADP-glucose pyrophosphorylase</fullName>
        <shortName evidence="1">ADPGlc PPase</shortName>
    </alternativeName>
    <alternativeName>
        <fullName evidence="1">ADP-glucose synthase</fullName>
    </alternativeName>
</protein>
<dbReference type="EC" id="2.7.7.27" evidence="1"/>
<dbReference type="EMBL" id="CP001147">
    <property type="protein sequence ID" value="ACI20202.1"/>
    <property type="molecule type" value="Genomic_DNA"/>
</dbReference>
<dbReference type="RefSeq" id="WP_012544940.1">
    <property type="nucleotide sequence ID" value="NC_011296.1"/>
</dbReference>
<dbReference type="RefSeq" id="YP_002248219.1">
    <property type="nucleotide sequence ID" value="NC_011296.1"/>
</dbReference>
<dbReference type="SMR" id="B5YIR0"/>
<dbReference type="FunCoup" id="B5YIR0">
    <property type="interactions" value="145"/>
</dbReference>
<dbReference type="STRING" id="289376.THEYE_A0372"/>
<dbReference type="EnsemblBacteria" id="ACI20202">
    <property type="protein sequence ID" value="ACI20202"/>
    <property type="gene ID" value="THEYE_A0372"/>
</dbReference>
<dbReference type="KEGG" id="tye:THEYE_A0372"/>
<dbReference type="PATRIC" id="fig|289376.4.peg.365"/>
<dbReference type="eggNOG" id="COG0448">
    <property type="taxonomic scope" value="Bacteria"/>
</dbReference>
<dbReference type="HOGENOM" id="CLU_029499_14_1_0"/>
<dbReference type="InParanoid" id="B5YIR0"/>
<dbReference type="OrthoDB" id="9801810at2"/>
<dbReference type="UniPathway" id="UPA00164"/>
<dbReference type="Proteomes" id="UP000000718">
    <property type="component" value="Chromosome"/>
</dbReference>
<dbReference type="GO" id="GO:0005524">
    <property type="term" value="F:ATP binding"/>
    <property type="evidence" value="ECO:0007669"/>
    <property type="project" value="UniProtKB-KW"/>
</dbReference>
<dbReference type="GO" id="GO:0008878">
    <property type="term" value="F:glucose-1-phosphate adenylyltransferase activity"/>
    <property type="evidence" value="ECO:0007669"/>
    <property type="project" value="UniProtKB-UniRule"/>
</dbReference>
<dbReference type="GO" id="GO:0005978">
    <property type="term" value="P:glycogen biosynthetic process"/>
    <property type="evidence" value="ECO:0007669"/>
    <property type="project" value="UniProtKB-UniRule"/>
</dbReference>
<dbReference type="CDD" id="cd02508">
    <property type="entry name" value="ADP_Glucose_PP"/>
    <property type="match status" value="1"/>
</dbReference>
<dbReference type="CDD" id="cd04651">
    <property type="entry name" value="LbH_G1P_AT_C"/>
    <property type="match status" value="1"/>
</dbReference>
<dbReference type="Gene3D" id="2.160.10.10">
    <property type="entry name" value="Hexapeptide repeat proteins"/>
    <property type="match status" value="1"/>
</dbReference>
<dbReference type="Gene3D" id="3.90.550.10">
    <property type="entry name" value="Spore Coat Polysaccharide Biosynthesis Protein SpsA, Chain A"/>
    <property type="match status" value="1"/>
</dbReference>
<dbReference type="HAMAP" id="MF_00624">
    <property type="entry name" value="GlgC"/>
    <property type="match status" value="1"/>
</dbReference>
<dbReference type="InterPro" id="IPR011831">
    <property type="entry name" value="ADP-Glc_PPase"/>
</dbReference>
<dbReference type="InterPro" id="IPR005836">
    <property type="entry name" value="ADP_Glu_pyroP_CS"/>
</dbReference>
<dbReference type="InterPro" id="IPR023049">
    <property type="entry name" value="GlgC_bac"/>
</dbReference>
<dbReference type="InterPro" id="IPR056818">
    <property type="entry name" value="GlmU/GlgC-like_hexapep"/>
</dbReference>
<dbReference type="InterPro" id="IPR005835">
    <property type="entry name" value="NTP_transferase_dom"/>
</dbReference>
<dbReference type="InterPro" id="IPR029044">
    <property type="entry name" value="Nucleotide-diphossugar_trans"/>
</dbReference>
<dbReference type="InterPro" id="IPR011004">
    <property type="entry name" value="Trimer_LpxA-like_sf"/>
</dbReference>
<dbReference type="NCBIfam" id="TIGR02091">
    <property type="entry name" value="glgC"/>
    <property type="match status" value="1"/>
</dbReference>
<dbReference type="NCBIfam" id="NF002023">
    <property type="entry name" value="PRK00844.1"/>
    <property type="match status" value="1"/>
</dbReference>
<dbReference type="PANTHER" id="PTHR43523:SF2">
    <property type="entry name" value="GLUCOSE-1-PHOSPHATE ADENYLYLTRANSFERASE"/>
    <property type="match status" value="1"/>
</dbReference>
<dbReference type="PANTHER" id="PTHR43523">
    <property type="entry name" value="GLUCOSE-1-PHOSPHATE ADENYLYLTRANSFERASE-RELATED"/>
    <property type="match status" value="1"/>
</dbReference>
<dbReference type="Pfam" id="PF24894">
    <property type="entry name" value="Hexapep_GlmU"/>
    <property type="match status" value="1"/>
</dbReference>
<dbReference type="Pfam" id="PF00483">
    <property type="entry name" value="NTP_transferase"/>
    <property type="match status" value="1"/>
</dbReference>
<dbReference type="SUPFAM" id="SSF53448">
    <property type="entry name" value="Nucleotide-diphospho-sugar transferases"/>
    <property type="match status" value="1"/>
</dbReference>
<dbReference type="SUPFAM" id="SSF51161">
    <property type="entry name" value="Trimeric LpxA-like enzymes"/>
    <property type="match status" value="1"/>
</dbReference>
<dbReference type="PROSITE" id="PS00809">
    <property type="entry name" value="ADP_GLC_PYROPHOSPH_2"/>
    <property type="match status" value="1"/>
</dbReference>
<dbReference type="PROSITE" id="PS00810">
    <property type="entry name" value="ADP_GLC_PYROPHOSPH_3"/>
    <property type="match status" value="1"/>
</dbReference>
<reference key="1">
    <citation type="submission" date="2008-08" db="EMBL/GenBank/DDBJ databases">
        <title>The complete genome sequence of Thermodesulfovibrio yellowstonii strain ATCC 51303 / DSM 11347 / YP87.</title>
        <authorList>
            <person name="Dodson R.J."/>
            <person name="Durkin A.S."/>
            <person name="Wu M."/>
            <person name="Eisen J."/>
            <person name="Sutton G."/>
        </authorList>
    </citation>
    <scope>NUCLEOTIDE SEQUENCE [LARGE SCALE GENOMIC DNA]</scope>
    <source>
        <strain>ATCC 51303 / DSM 11347 / YP87</strain>
    </source>
</reference>
<comment type="function">
    <text evidence="1">Involved in the biosynthesis of ADP-glucose, a building block required for the elongation reactions to produce glycogen. Catalyzes the reaction between ATP and alpha-D-glucose 1-phosphate (G1P) to produce pyrophosphate and ADP-Glc.</text>
</comment>
<comment type="catalytic activity">
    <reaction evidence="1">
        <text>alpha-D-glucose 1-phosphate + ATP + H(+) = ADP-alpha-D-glucose + diphosphate</text>
        <dbReference type="Rhea" id="RHEA:12120"/>
        <dbReference type="ChEBI" id="CHEBI:15378"/>
        <dbReference type="ChEBI" id="CHEBI:30616"/>
        <dbReference type="ChEBI" id="CHEBI:33019"/>
        <dbReference type="ChEBI" id="CHEBI:57498"/>
        <dbReference type="ChEBI" id="CHEBI:58601"/>
        <dbReference type="EC" id="2.7.7.27"/>
    </reaction>
</comment>
<comment type="pathway">
    <text evidence="1">Glycan biosynthesis; glycogen biosynthesis.</text>
</comment>
<comment type="subunit">
    <text evidence="1">Homotetramer.</text>
</comment>
<comment type="similarity">
    <text evidence="1">Belongs to the bacterial/plant glucose-1-phosphate adenylyltransferase family.</text>
</comment>
<sequence length="411" mass="46816">MPKVLAIVLAGGKGERLFPLTSFRSKPSVPFGARYRIVDFVLSNLVNSQIYSIYLLVQYKSQSLIEHIRQNWFFSSVGSDHFVTVVPPQMRMGPEWFQGTADAVFQNIGLIKEHNPDIVLIFGADHIYRMDIRQMIKFHIENNAHVTVAARPVALKHASSFGVIITDPDHRIAGFQEKPKDPIPMPDNPDMAYVSMGNYIFNADILIDALVRAEKKKQHDFGAHVIPDLVGRKCKVYAYDFAKNEIPGIKSYEERGYWRDVGTISAYFDAHMDMLGEKPIFEIYNKMWPIHPARYEGPPVKILDGEIKNSIIAEGALIYGGKIENSFIRSGSIIEKDVEIKDSLIMDDVIIKRNSKLYRVIVDKKNVVYEGEKIGFSAEQDRFRCYIDSSGICILPRAARYNDWIKEINHA</sequence>
<accession>B5YIR0</accession>
<evidence type="ECO:0000255" key="1">
    <source>
        <dbReference type="HAMAP-Rule" id="MF_00624"/>
    </source>
</evidence>
<proteinExistence type="inferred from homology"/>
<organism>
    <name type="scientific">Thermodesulfovibrio yellowstonii (strain ATCC 51303 / DSM 11347 / YP87)</name>
    <dbReference type="NCBI Taxonomy" id="289376"/>
    <lineage>
        <taxon>Bacteria</taxon>
        <taxon>Pseudomonadati</taxon>
        <taxon>Nitrospirota</taxon>
        <taxon>Thermodesulfovibrionia</taxon>
        <taxon>Thermodesulfovibrionales</taxon>
        <taxon>Thermodesulfovibrionaceae</taxon>
        <taxon>Thermodesulfovibrio</taxon>
    </lineage>
</organism>
<feature type="chain" id="PRO_1000130511" description="Glucose-1-phosphate adenylyltransferase">
    <location>
        <begin position="1"/>
        <end position="411"/>
    </location>
</feature>
<feature type="binding site" evidence="1">
    <location>
        <position position="162"/>
    </location>
    <ligand>
        <name>alpha-D-glucose 1-phosphate</name>
        <dbReference type="ChEBI" id="CHEBI:58601"/>
    </ligand>
</feature>
<feature type="binding site" evidence="1">
    <location>
        <begin position="177"/>
        <end position="178"/>
    </location>
    <ligand>
        <name>alpha-D-glucose 1-phosphate</name>
        <dbReference type="ChEBI" id="CHEBI:58601"/>
    </ligand>
</feature>
<feature type="binding site" evidence="1">
    <location>
        <position position="195"/>
    </location>
    <ligand>
        <name>alpha-D-glucose 1-phosphate</name>
        <dbReference type="ChEBI" id="CHEBI:58601"/>
    </ligand>
</feature>